<keyword id="KW-0002">3D-structure</keyword>
<keyword id="KW-0067">ATP-binding</keyword>
<keyword id="KW-0227">DNA damage</keyword>
<keyword id="KW-0233">DNA recombination</keyword>
<keyword id="KW-0234">DNA repair</keyword>
<keyword id="KW-0238">DNA-binding</keyword>
<keyword id="KW-0378">Hydrolase</keyword>
<keyword id="KW-0547">Nucleotide-binding</keyword>
<comment type="function">
    <text evidence="1 3 4">Promotes Holliday junction (HJ) branch migration and unwinds Y-shaped DNA (but not replication forks or dsDNA) in an ATP hydrolysis-dependent manner (PubMed:28238763). Stimulates cleavage by HJ resolvase Hjc (PubMed:28238763). Unwinds Y-shaped and 3'-flap DNA substrates. In the absence of other proteins stabilizes replication forks (prevents spontaneous unwinding); Hjc, Hjm (Hel308) and PINA coordinate HJ migration and cleavage of replication forks in a coordinated way (PubMed:29846688). Inhibits the 5'-3' (but not 3'-5') helicase activity of helicase Hjm (Hel308) on overhang DNA (PubMed:29846688). Probably acts as an ATP-dependent pump that pulls DNA through the hexamer (By similarity).</text>
</comment>
<comment type="catalytic activity">
    <reaction evidence="3">
        <text>ATP + H2O = ADP + phosphate + H(+)</text>
        <dbReference type="Rhea" id="RHEA:13065"/>
        <dbReference type="ChEBI" id="CHEBI:15377"/>
        <dbReference type="ChEBI" id="CHEBI:15378"/>
        <dbReference type="ChEBI" id="CHEBI:30616"/>
        <dbReference type="ChEBI" id="CHEBI:43474"/>
        <dbReference type="ChEBI" id="CHEBI:456216"/>
        <dbReference type="EC" id="3.6.4.12"/>
    </reaction>
</comment>
<comment type="cofactor">
    <cofactor evidence="3">
        <name>Ca(2+)</name>
        <dbReference type="ChEBI" id="CHEBI:29108"/>
    </cofactor>
    <text evidence="3">Ca(2+) stimulates ATPase activity more than Mn(2+) or Mg(2+).</text>
</comment>
<comment type="biophysicochemical properties">
    <phDependence>
        <text evidence="3">Optimum pH is 8.0-9.0 for ATPase activity.</text>
    </phDependence>
</comment>
<comment type="subunit">
    <text evidence="3 4">Homohexamer; the central pore (25-31 Angstroms) is large enough to hold dsDNA (PubMed:28238763). In PDB:5F4H two of the 6 subunits are in an ATP-binding competent conformation (PubMed:28238763). Interacts with Holliday junction resolvase Hjc; in the presence of HJ DNA this interaction decreases branch migration but not Y-DNA unwinding (PubMed:28238763). Interacts with helicase Hjm (hel308) which decreases the DNA helicase activity of Hjm (PubMed:29846688).</text>
</comment>
<comment type="domain">
    <text evidence="4 8">The C-terminus (residues 434-505) forms a novel KH fold; this domain binds ssDNA but is not sufficient on its own to interact with Hjm (PubMed:29846688). It is probably destabilized in the homohexamer (Probable) (PubMed:29846688).</text>
</comment>
<comment type="disruption phenotype">
    <text evidence="3">Essential, it cannot be deleted.</text>
</comment>
<comment type="miscellaneous">
    <text evidence="4">A triple mutation (Arg-147-Lys/Ile-199-Ser/Arg-206-Ala) forms monomers rather than hexamers where the PIN and helicase domains are in very different positions than in wild-type protein, see PDB:5YWW.</text>
</comment>
<feature type="chain" id="PRO_0000459123" description="Holliday junction branch migration ATPase PINA">
    <location>
        <begin position="1"/>
        <end position="505"/>
    </location>
</feature>
<feature type="domain" description="PINc" evidence="2">
    <location>
        <begin position="2"/>
        <end position="106"/>
    </location>
</feature>
<feature type="region of interest" description="KH domain" evidence="4 10">
    <location>
        <begin position="434"/>
        <end position="505"/>
    </location>
</feature>
<feature type="region of interest" description="Required for maximum interaction with Hjc and Hjm" evidence="3 4">
    <location>
        <begin position="493"/>
        <end position="505"/>
    </location>
</feature>
<feature type="mutagenesis site" description="Nearly complete loss of ATPase activity, does not unwind HJ DNA." evidence="3">
    <original>R</original>
    <variation>A</variation>
    <location>
        <position position="206"/>
    </location>
</feature>
<feature type="mutagenesis site" description="Loss of ATPase activity, does not unwind HJ DNA." evidence="3">
    <original>K</original>
    <variation>A</variation>
    <location>
        <position position="261"/>
    </location>
</feature>
<feature type="mutagenesis site" description="Loss of ATPase activity." evidence="3">
    <original>D</original>
    <variation>A</variation>
    <location>
        <position position="322"/>
    </location>
</feature>
<feature type="mutagenesis site" description="Loss of ATPase activity." evidence="3">
    <original>R</original>
    <variation>A</variation>
    <location>
        <position position="325"/>
    </location>
</feature>
<feature type="mutagenesis site" description="Nearly complete loss of interaction with Hjc and Hjm (hel308)." evidence="3 4">
    <location>
        <begin position="493"/>
        <end position="505"/>
    </location>
</feature>
<feature type="strand" evidence="13">
    <location>
        <begin position="3"/>
        <end position="6"/>
    </location>
</feature>
<feature type="helix" evidence="13">
    <location>
        <begin position="8"/>
        <end position="12"/>
    </location>
</feature>
<feature type="helix" evidence="13">
    <location>
        <begin position="15"/>
        <end position="20"/>
    </location>
</feature>
<feature type="strand" evidence="13">
    <location>
        <begin position="26"/>
        <end position="31"/>
    </location>
</feature>
<feature type="helix" evidence="13">
    <location>
        <begin position="32"/>
        <end position="43"/>
    </location>
</feature>
<feature type="helix" evidence="13">
    <location>
        <begin position="47"/>
        <end position="65"/>
    </location>
</feature>
<feature type="strand" evidence="13">
    <location>
        <begin position="70"/>
        <end position="74"/>
    </location>
</feature>
<feature type="helix" evidence="13">
    <location>
        <begin position="82"/>
        <end position="93"/>
    </location>
</feature>
<feature type="strand" evidence="13">
    <location>
        <begin position="96"/>
        <end position="100"/>
    </location>
</feature>
<feature type="helix" evidence="13">
    <location>
        <begin position="102"/>
        <end position="111"/>
    </location>
</feature>
<feature type="strand" evidence="13">
    <location>
        <begin position="115"/>
        <end position="117"/>
    </location>
</feature>
<feature type="strand" evidence="12">
    <location>
        <begin position="121"/>
        <end position="124"/>
    </location>
</feature>
<feature type="helix" evidence="13">
    <location>
        <begin position="126"/>
        <end position="130"/>
    </location>
</feature>
<feature type="strand" evidence="13">
    <location>
        <begin position="133"/>
        <end position="141"/>
    </location>
</feature>
<feature type="strand" evidence="13">
    <location>
        <begin position="147"/>
        <end position="152"/>
    </location>
</feature>
<feature type="strand" evidence="13">
    <location>
        <begin position="155"/>
        <end position="161"/>
    </location>
</feature>
<feature type="helix" evidence="13">
    <location>
        <begin position="168"/>
        <end position="182"/>
    </location>
</feature>
<feature type="strand" evidence="13">
    <location>
        <begin position="189"/>
        <end position="194"/>
    </location>
</feature>
<feature type="strand" evidence="13">
    <location>
        <begin position="197"/>
        <end position="202"/>
    </location>
</feature>
<feature type="strand" evidence="13">
    <location>
        <begin position="205"/>
        <end position="210"/>
    </location>
</feature>
<feature type="turn" evidence="13">
    <location>
        <begin position="212"/>
        <end position="214"/>
    </location>
</feature>
<feature type="strand" evidence="13">
    <location>
        <begin position="215"/>
        <end position="217"/>
    </location>
</feature>
<feature type="strand" evidence="13">
    <location>
        <begin position="219"/>
        <end position="223"/>
    </location>
</feature>
<feature type="helix" evidence="13">
    <location>
        <begin position="231"/>
        <end position="234"/>
    </location>
</feature>
<feature type="helix" evidence="13">
    <location>
        <begin position="238"/>
        <end position="246"/>
    </location>
</feature>
<feature type="strand" evidence="13">
    <location>
        <begin position="250"/>
        <end position="256"/>
    </location>
</feature>
<feature type="helix" evidence="13">
    <location>
        <begin position="261"/>
        <end position="274"/>
    </location>
</feature>
<feature type="strand" evidence="13">
    <location>
        <begin position="279"/>
        <end position="282"/>
    </location>
</feature>
<feature type="strand" evidence="12">
    <location>
        <begin position="294"/>
        <end position="298"/>
    </location>
</feature>
<feature type="helix" evidence="12">
    <location>
        <begin position="299"/>
        <end position="301"/>
    </location>
</feature>
<feature type="helix" evidence="13">
    <location>
        <begin position="306"/>
        <end position="314"/>
    </location>
</feature>
<feature type="strand" evidence="13">
    <location>
        <begin position="317"/>
        <end position="321"/>
    </location>
</feature>
<feature type="helix" evidence="13">
    <location>
        <begin position="327"/>
        <end position="338"/>
    </location>
</feature>
<feature type="strand" evidence="13">
    <location>
        <begin position="342"/>
        <end position="346"/>
    </location>
</feature>
<feature type="strand" evidence="13">
    <location>
        <begin position="349"/>
        <end position="351"/>
    </location>
</feature>
<feature type="helix" evidence="13">
    <location>
        <begin position="352"/>
        <end position="356"/>
    </location>
</feature>
<feature type="turn" evidence="13">
    <location>
        <begin position="357"/>
        <end position="362"/>
    </location>
</feature>
<feature type="helix" evidence="13">
    <location>
        <begin position="365"/>
        <end position="367"/>
    </location>
</feature>
<feature type="helix" evidence="13">
    <location>
        <begin position="368"/>
        <end position="371"/>
    </location>
</feature>
<feature type="strand" evidence="13">
    <location>
        <begin position="374"/>
        <end position="379"/>
    </location>
</feature>
<feature type="strand" evidence="13">
    <location>
        <begin position="382"/>
        <end position="394"/>
    </location>
</feature>
<feature type="helix" evidence="13">
    <location>
        <begin position="402"/>
        <end position="404"/>
    </location>
</feature>
<feature type="strand" evidence="13">
    <location>
        <begin position="406"/>
        <end position="413"/>
    </location>
</feature>
<feature type="turn" evidence="13">
    <location>
        <begin position="414"/>
        <end position="416"/>
    </location>
</feature>
<feature type="strand" evidence="13">
    <location>
        <begin position="419"/>
        <end position="426"/>
    </location>
</feature>
<feature type="strand" evidence="13">
    <location>
        <begin position="429"/>
        <end position="434"/>
    </location>
</feature>
<feature type="helix" evidence="13">
    <location>
        <begin position="435"/>
        <end position="453"/>
    </location>
</feature>
<feature type="strand" evidence="13">
    <location>
        <begin position="460"/>
        <end position="464"/>
    </location>
</feature>
<feature type="strand" evidence="13">
    <location>
        <begin position="467"/>
        <end position="472"/>
    </location>
</feature>
<feature type="helix" evidence="13">
    <location>
        <begin position="474"/>
        <end position="479"/>
    </location>
</feature>
<feature type="helix" evidence="13">
    <location>
        <begin position="482"/>
        <end position="495"/>
    </location>
</feature>
<feature type="strand" evidence="13">
    <location>
        <begin position="499"/>
        <end position="503"/>
    </location>
</feature>
<name>PINA_SACI5</name>
<protein>
    <recommendedName>
        <fullName evidence="7">Holliday junction branch migration ATPase PINA</fullName>
        <shortName evidence="5">PIN domain-containing ATPase</shortName>
        <shortName evidence="5">PINA</shortName>
        <ecNumber evidence="3">3.6.4.12</ecNumber>
    </recommendedName>
</protein>
<accession>F0NID4</accession>
<organism>
    <name type="scientific">Saccharolobus islandicus (strain REY15A)</name>
    <name type="common">Sulfolobus islandicus</name>
    <dbReference type="NCBI Taxonomy" id="930945"/>
    <lineage>
        <taxon>Archaea</taxon>
        <taxon>Thermoproteota</taxon>
        <taxon>Thermoprotei</taxon>
        <taxon>Sulfolobales</taxon>
        <taxon>Sulfolobaceae</taxon>
        <taxon>Saccharolobus</taxon>
    </lineage>
</organism>
<reference evidence="9" key="1">
    <citation type="journal article" date="2011" name="J. Bacteriol.">
        <title>Genome analyses of icelandic strains of Sulfolobus islandicus, model organisms for genetic and virus-host interaction studies.</title>
        <authorList>
            <person name="Guo L."/>
            <person name="Brugger K."/>
            <person name="Liu C."/>
            <person name="Shah S.A."/>
            <person name="Zheng H."/>
            <person name="Zhu Y."/>
            <person name="Wang S."/>
            <person name="Lillestol R.K."/>
            <person name="Chen L."/>
            <person name="Frank J."/>
            <person name="Prangishvili D."/>
            <person name="Paulin L."/>
            <person name="She Q."/>
            <person name="Huang L."/>
            <person name="Garrett R.A."/>
        </authorList>
    </citation>
    <scope>NUCLEOTIDE SEQUENCE [LARGE SCALE GENOMIC DNA]</scope>
    <source>
        <strain>REY15A</strain>
    </source>
</reference>
<reference evidence="12" key="2">
    <citation type="journal article" date="2017" name="J. Mol. Biol.">
        <title>Structure and Function of a Novel ATPase that Interacts with Holliday Junction Resolvase Hjc and Promotes Branch Migration.</title>
        <authorList>
            <person name="Zhai B."/>
            <person name="DuPrez K."/>
            <person name="Doukov T.I."/>
            <person name="Li H."/>
            <person name="Huang M."/>
            <person name="Shang G."/>
            <person name="Ni J."/>
            <person name="Gu L."/>
            <person name="Shen Y."/>
            <person name="Fan L."/>
        </authorList>
    </citation>
    <scope>X-RAY CRYSTALLOGRAPHY (2.70 ANGSTROMS)</scope>
    <scope>FUNCTION AS AN ATPASE</scope>
    <scope>CATALYTIC ACTIVITY</scope>
    <scope>COFACTOR</scope>
    <scope>BIOPHYSICOCHEMICAL PROPERTIES</scope>
    <scope>SUBUNIT</scope>
    <scope>INTERACTION WITH HJC</scope>
    <scope>DISRUPTION PHENOTYPE</scope>
    <scope>DNA-BINDING</scope>
    <scope>MUTAGENESIS OF ARG-206; LYS-261; ASP-322; ARG-325 AND 493-LYS--ASP-505</scope>
    <source>
        <strain>REY15A / E233S</strain>
    </source>
</reference>
<reference evidence="11" key="3">
    <citation type="journal article" date="2018" name="Nucleic Acids Res.">
        <title>The archaeal ATPase PINA interacts with the helicase Hjm via its carboxyl terminal KH domain remodeling and processing replication fork and Holliday junction.</title>
        <authorList>
            <person name="Zhai B."/>
            <person name="DuPrez K."/>
            <person name="Han X."/>
            <person name="Yuan Z."/>
            <person name="Ahmad S."/>
            <person name="Xu C."/>
            <person name="Gu L."/>
            <person name="Ni J."/>
            <person name="Fan L."/>
            <person name="Shen Y."/>
        </authorList>
    </citation>
    <scope>X-RAY CRYSTALLOGRAPHY (2.33 ANGSTROMS)</scope>
    <scope>FUNCTION</scope>
    <scope>INTERACTION WITH HEL308</scope>
    <scope>DOMAIN</scope>
    <scope>DNA-BINDING</scope>
    <scope>MUTAGENESIS OF 493-LYS--ASP-505</scope>
    <source>
        <strain>REY15A / E233S</strain>
    </source>
</reference>
<proteinExistence type="evidence at protein level"/>
<gene>
    <name evidence="6" type="primary">pina</name>
    <name type="ordered locus">SiRe_1432</name>
</gene>
<evidence type="ECO:0000250" key="1">
    <source>
        <dbReference type="UniProtKB" id="Q5M2B1"/>
    </source>
</evidence>
<evidence type="ECO:0000255" key="2"/>
<evidence type="ECO:0000269" key="3">
    <source>
    </source>
</evidence>
<evidence type="ECO:0000269" key="4">
    <source>
    </source>
</evidence>
<evidence type="ECO:0000303" key="5">
    <source>
    </source>
</evidence>
<evidence type="ECO:0000303" key="6">
    <source>
    </source>
</evidence>
<evidence type="ECO:0000305" key="7"/>
<evidence type="ECO:0000305" key="8">
    <source>
    </source>
</evidence>
<evidence type="ECO:0000312" key="9">
    <source>
        <dbReference type="EMBL" id="ADX85498.1"/>
    </source>
</evidence>
<evidence type="ECO:0000312" key="10">
    <source>
        <dbReference type="PDB" id="5YWW"/>
    </source>
</evidence>
<evidence type="ECO:0007744" key="11">
    <source>
        <dbReference type="PDB" id="5YWW"/>
    </source>
</evidence>
<evidence type="ECO:0007829" key="12">
    <source>
        <dbReference type="PDB" id="5F4H"/>
    </source>
</evidence>
<evidence type="ECO:0007829" key="13">
    <source>
        <dbReference type="PDB" id="5YWW"/>
    </source>
</evidence>
<dbReference type="EC" id="3.6.4.12" evidence="3"/>
<dbReference type="EMBL" id="CP002425">
    <property type="protein sequence ID" value="ADX85498.1"/>
    <property type="molecule type" value="Genomic_DNA"/>
</dbReference>
<dbReference type="PDB" id="5F4H">
    <property type="method" value="X-ray"/>
    <property type="resolution" value="2.70 A"/>
    <property type="chains" value="A/B/C/D/E/F=1-505"/>
</dbReference>
<dbReference type="PDB" id="5YWW">
    <property type="method" value="X-ray"/>
    <property type="resolution" value="2.33 A"/>
    <property type="chains" value="A=1-505"/>
</dbReference>
<dbReference type="PDBsum" id="5F4H"/>
<dbReference type="PDBsum" id="5YWW"/>
<dbReference type="SMR" id="F0NID4"/>
<dbReference type="STRING" id="930945.SiRe_1432"/>
<dbReference type="KEGG" id="sir:SiRe_1432"/>
<dbReference type="eggNOG" id="arCOG04116">
    <property type="taxonomic scope" value="Archaea"/>
</dbReference>
<dbReference type="HOGENOM" id="CLU_023387_0_0_2"/>
<dbReference type="Proteomes" id="UP000002664">
    <property type="component" value="Chromosome"/>
</dbReference>
<dbReference type="GO" id="GO:0005524">
    <property type="term" value="F:ATP binding"/>
    <property type="evidence" value="ECO:0007669"/>
    <property type="project" value="UniProtKB-KW"/>
</dbReference>
<dbReference type="GO" id="GO:0003677">
    <property type="term" value="F:DNA binding"/>
    <property type="evidence" value="ECO:0007669"/>
    <property type="project" value="UniProtKB-KW"/>
</dbReference>
<dbReference type="GO" id="GO:0009378">
    <property type="term" value="F:four-way junction helicase activity"/>
    <property type="evidence" value="ECO:0000314"/>
    <property type="project" value="UniProtKB"/>
</dbReference>
<dbReference type="GO" id="GO:0016787">
    <property type="term" value="F:hydrolase activity"/>
    <property type="evidence" value="ECO:0007669"/>
    <property type="project" value="UniProtKB-KW"/>
</dbReference>
<dbReference type="GO" id="GO:0006310">
    <property type="term" value="P:DNA recombination"/>
    <property type="evidence" value="ECO:0007669"/>
    <property type="project" value="UniProtKB-KW"/>
</dbReference>
<dbReference type="GO" id="GO:0006281">
    <property type="term" value="P:DNA repair"/>
    <property type="evidence" value="ECO:0007669"/>
    <property type="project" value="UniProtKB-KW"/>
</dbReference>
<dbReference type="Gene3D" id="3.40.50.1010">
    <property type="entry name" value="5'-nuclease"/>
    <property type="match status" value="1"/>
</dbReference>
<dbReference type="Gene3D" id="3.40.50.300">
    <property type="entry name" value="P-loop containing nucleotide triphosphate hydrolases"/>
    <property type="match status" value="1"/>
</dbReference>
<dbReference type="InterPro" id="IPR052041">
    <property type="entry name" value="Nucleic_acid_metab_PIN/TRAM"/>
</dbReference>
<dbReference type="InterPro" id="IPR027417">
    <property type="entry name" value="P-loop_NTPase"/>
</dbReference>
<dbReference type="InterPro" id="IPR002716">
    <property type="entry name" value="PIN_dom"/>
</dbReference>
<dbReference type="NCBIfam" id="NF010335">
    <property type="entry name" value="PRK13764.1"/>
    <property type="match status" value="1"/>
</dbReference>
<dbReference type="PANTHER" id="PTHR11603">
    <property type="entry name" value="AAA FAMILY ATPASE"/>
    <property type="match status" value="1"/>
</dbReference>
<dbReference type="PANTHER" id="PTHR11603:SF147">
    <property type="entry name" value="MEMBRANE PROTEIN"/>
    <property type="match status" value="1"/>
</dbReference>
<dbReference type="SMART" id="SM00670">
    <property type="entry name" value="PINc"/>
    <property type="match status" value="1"/>
</dbReference>
<dbReference type="SUPFAM" id="SSF52540">
    <property type="entry name" value="P-loop containing nucleoside triphosphate hydrolases"/>
    <property type="match status" value="1"/>
</dbReference>
<sequence>MNDLMLDKSALLFGVSKYLEKGIITGNVLIHKSLLAELERESNDGLVSAEIALDEVKKLKDITERILVNFEIVGDDSKKGEANELSREYCLEKGCIIVTADETQKKICDAMGIQYNFLQPLKQGLSFESFFDDETMSLHIKEDTVPRAKKGKPGNWKFVNLSDKPMLSTDVRMIANEIINAVRLIKGSFVEIERRGSLIIQLGNYRVVITRPPLSDGWEITITRPVVRKRLEDYNLDERLIKRLEERAEGIIIAGAPGMGKTTFAQALAEYYMRLGKIVKTIESPRDMHLPPEITQYSKNYAEIGELHDILLLSRPDYTVYDEMRNDEDFKLYVDLRLAGVGMVGVVHATSPIDAIHRFVNRVDIGTIPNILDTIIFINSGNVSKVYTLEMTVKVPAGLKEADLARPVVEIKDLATGNTEYEIYVFGEQTMIVPVNRGITMSNMEFKISKIVNNIIPNATVKYEDGEYVIVIPKEEIGKYNRKLVQRLKRLEKKNNIKIKIKLSD</sequence>